<protein>
    <recommendedName>
        <fullName evidence="1">Aspartate carbamoyltransferase catalytic subunit</fullName>
        <ecNumber evidence="1">2.1.3.2</ecNumber>
    </recommendedName>
    <alternativeName>
        <fullName evidence="1">Aspartate transcarbamylase</fullName>
        <shortName evidence="1">ATCase</shortName>
    </alternativeName>
</protein>
<sequence length="309" mass="34169">MGYKHKDLLGTRELSKEEILYFLDAAKEFKELNLKDIKKCEYLRGKTTINAFYENSTRTRTSFEIAAKRLGADTINFTASNSSVKKGETLNDTMNNMAAMKTDIIVLRHPSSGAAKFAAARTDASVVNAGDGTNEHPSQALLDLFTLLEYGKSLDKNTTVSIIGDIARSRVARSDIWAMKKFGINVKLFAPKMMIPKDAEVFESEICKNMEEACEGSDVIIMLRIQLERADGDVAFPSSREYSKFFGLNKNRIKLAKPDAIVLHPGPINRGVELNSDVADGTHSVILNQVENGVAVRMAILNTLINNRG</sequence>
<proteinExistence type="inferred from homology"/>
<keyword id="KW-0665">Pyrimidine biosynthesis</keyword>
<keyword id="KW-1185">Reference proteome</keyword>
<keyword id="KW-0808">Transferase</keyword>
<feature type="chain" id="PRO_0000321084" description="Aspartate carbamoyltransferase catalytic subunit">
    <location>
        <begin position="1"/>
        <end position="309"/>
    </location>
</feature>
<feature type="binding site" evidence="1">
    <location>
        <position position="58"/>
    </location>
    <ligand>
        <name>carbamoyl phosphate</name>
        <dbReference type="ChEBI" id="CHEBI:58228"/>
    </ligand>
</feature>
<feature type="binding site" evidence="1">
    <location>
        <position position="59"/>
    </location>
    <ligand>
        <name>carbamoyl phosphate</name>
        <dbReference type="ChEBI" id="CHEBI:58228"/>
    </ligand>
</feature>
<feature type="binding site" evidence="1">
    <location>
        <position position="86"/>
    </location>
    <ligand>
        <name>L-aspartate</name>
        <dbReference type="ChEBI" id="CHEBI:29991"/>
    </ligand>
</feature>
<feature type="binding site" evidence="1">
    <location>
        <position position="108"/>
    </location>
    <ligand>
        <name>carbamoyl phosphate</name>
        <dbReference type="ChEBI" id="CHEBI:58228"/>
    </ligand>
</feature>
<feature type="binding site" evidence="1">
    <location>
        <position position="136"/>
    </location>
    <ligand>
        <name>carbamoyl phosphate</name>
        <dbReference type="ChEBI" id="CHEBI:58228"/>
    </ligand>
</feature>
<feature type="binding site" evidence="1">
    <location>
        <position position="139"/>
    </location>
    <ligand>
        <name>carbamoyl phosphate</name>
        <dbReference type="ChEBI" id="CHEBI:58228"/>
    </ligand>
</feature>
<feature type="binding site" evidence="1">
    <location>
        <position position="170"/>
    </location>
    <ligand>
        <name>L-aspartate</name>
        <dbReference type="ChEBI" id="CHEBI:29991"/>
    </ligand>
</feature>
<feature type="binding site" evidence="1">
    <location>
        <position position="224"/>
    </location>
    <ligand>
        <name>L-aspartate</name>
        <dbReference type="ChEBI" id="CHEBI:29991"/>
    </ligand>
</feature>
<feature type="binding site" evidence="1">
    <location>
        <position position="266"/>
    </location>
    <ligand>
        <name>carbamoyl phosphate</name>
        <dbReference type="ChEBI" id="CHEBI:58228"/>
    </ligand>
</feature>
<feature type="binding site" evidence="1">
    <location>
        <position position="267"/>
    </location>
    <ligand>
        <name>carbamoyl phosphate</name>
        <dbReference type="ChEBI" id="CHEBI:58228"/>
    </ligand>
</feature>
<accession>A7GXT8</accession>
<dbReference type="EC" id="2.1.3.2" evidence="1"/>
<dbReference type="EMBL" id="CP000767">
    <property type="protein sequence ID" value="EAU00256.2"/>
    <property type="molecule type" value="Genomic_DNA"/>
</dbReference>
<dbReference type="RefSeq" id="WP_009650119.1">
    <property type="nucleotide sequence ID" value="NC_009715.2"/>
</dbReference>
<dbReference type="SMR" id="A7GXT8"/>
<dbReference type="STRING" id="360105.CCV52592_0155"/>
<dbReference type="KEGG" id="ccv:CCV52592_0155"/>
<dbReference type="HOGENOM" id="CLU_043846_2_0_7"/>
<dbReference type="OrthoDB" id="9774690at2"/>
<dbReference type="UniPathway" id="UPA00070">
    <property type="reaction ID" value="UER00116"/>
</dbReference>
<dbReference type="Proteomes" id="UP000006380">
    <property type="component" value="Chromosome"/>
</dbReference>
<dbReference type="GO" id="GO:0005829">
    <property type="term" value="C:cytosol"/>
    <property type="evidence" value="ECO:0007669"/>
    <property type="project" value="TreeGrafter"/>
</dbReference>
<dbReference type="GO" id="GO:0016597">
    <property type="term" value="F:amino acid binding"/>
    <property type="evidence" value="ECO:0007669"/>
    <property type="project" value="InterPro"/>
</dbReference>
<dbReference type="GO" id="GO:0004070">
    <property type="term" value="F:aspartate carbamoyltransferase activity"/>
    <property type="evidence" value="ECO:0007669"/>
    <property type="project" value="UniProtKB-UniRule"/>
</dbReference>
<dbReference type="GO" id="GO:0006207">
    <property type="term" value="P:'de novo' pyrimidine nucleobase biosynthetic process"/>
    <property type="evidence" value="ECO:0007669"/>
    <property type="project" value="InterPro"/>
</dbReference>
<dbReference type="GO" id="GO:0044205">
    <property type="term" value="P:'de novo' UMP biosynthetic process"/>
    <property type="evidence" value="ECO:0007669"/>
    <property type="project" value="UniProtKB-UniRule"/>
</dbReference>
<dbReference type="GO" id="GO:0006520">
    <property type="term" value="P:amino acid metabolic process"/>
    <property type="evidence" value="ECO:0007669"/>
    <property type="project" value="InterPro"/>
</dbReference>
<dbReference type="Gene3D" id="3.40.50.1370">
    <property type="entry name" value="Aspartate/ornithine carbamoyltransferase"/>
    <property type="match status" value="2"/>
</dbReference>
<dbReference type="HAMAP" id="MF_00001">
    <property type="entry name" value="Asp_carb_tr"/>
    <property type="match status" value="1"/>
</dbReference>
<dbReference type="InterPro" id="IPR006132">
    <property type="entry name" value="Asp/Orn_carbamoyltranf_P-bd"/>
</dbReference>
<dbReference type="InterPro" id="IPR006130">
    <property type="entry name" value="Asp/Orn_carbamoylTrfase"/>
</dbReference>
<dbReference type="InterPro" id="IPR036901">
    <property type="entry name" value="Asp/Orn_carbamoylTrfase_sf"/>
</dbReference>
<dbReference type="InterPro" id="IPR002082">
    <property type="entry name" value="Asp_carbamoyltransf"/>
</dbReference>
<dbReference type="InterPro" id="IPR006131">
    <property type="entry name" value="Asp_carbamoyltransf_Asp/Orn-bd"/>
</dbReference>
<dbReference type="NCBIfam" id="TIGR00670">
    <property type="entry name" value="asp_carb_tr"/>
    <property type="match status" value="1"/>
</dbReference>
<dbReference type="NCBIfam" id="NF002032">
    <property type="entry name" value="PRK00856.1"/>
    <property type="match status" value="1"/>
</dbReference>
<dbReference type="PANTHER" id="PTHR45753:SF6">
    <property type="entry name" value="ASPARTATE CARBAMOYLTRANSFERASE"/>
    <property type="match status" value="1"/>
</dbReference>
<dbReference type="PANTHER" id="PTHR45753">
    <property type="entry name" value="ORNITHINE CARBAMOYLTRANSFERASE, MITOCHONDRIAL"/>
    <property type="match status" value="1"/>
</dbReference>
<dbReference type="Pfam" id="PF00185">
    <property type="entry name" value="OTCace"/>
    <property type="match status" value="1"/>
</dbReference>
<dbReference type="Pfam" id="PF02729">
    <property type="entry name" value="OTCace_N"/>
    <property type="match status" value="1"/>
</dbReference>
<dbReference type="PRINTS" id="PR00100">
    <property type="entry name" value="AOTCASE"/>
</dbReference>
<dbReference type="PRINTS" id="PR00101">
    <property type="entry name" value="ATCASE"/>
</dbReference>
<dbReference type="SUPFAM" id="SSF53671">
    <property type="entry name" value="Aspartate/ornithine carbamoyltransferase"/>
    <property type="match status" value="1"/>
</dbReference>
<dbReference type="PROSITE" id="PS00097">
    <property type="entry name" value="CARBAMOYLTRANSFERASE"/>
    <property type="match status" value="1"/>
</dbReference>
<evidence type="ECO:0000255" key="1">
    <source>
        <dbReference type="HAMAP-Rule" id="MF_00001"/>
    </source>
</evidence>
<name>PYRB_CAMC5</name>
<comment type="function">
    <text evidence="1">Catalyzes the condensation of carbamoyl phosphate and aspartate to form carbamoyl aspartate and inorganic phosphate, the committed step in the de novo pyrimidine nucleotide biosynthesis pathway.</text>
</comment>
<comment type="catalytic activity">
    <reaction evidence="1">
        <text>carbamoyl phosphate + L-aspartate = N-carbamoyl-L-aspartate + phosphate + H(+)</text>
        <dbReference type="Rhea" id="RHEA:20013"/>
        <dbReference type="ChEBI" id="CHEBI:15378"/>
        <dbReference type="ChEBI" id="CHEBI:29991"/>
        <dbReference type="ChEBI" id="CHEBI:32814"/>
        <dbReference type="ChEBI" id="CHEBI:43474"/>
        <dbReference type="ChEBI" id="CHEBI:58228"/>
        <dbReference type="EC" id="2.1.3.2"/>
    </reaction>
</comment>
<comment type="pathway">
    <text evidence="1">Pyrimidine metabolism; UMP biosynthesis via de novo pathway; (S)-dihydroorotate from bicarbonate: step 2/3.</text>
</comment>
<comment type="subunit">
    <text evidence="1">Heterododecamer (2C3:3R2) of six catalytic PyrB chains organized as two trimers (C3), and six regulatory PyrI chains organized as three dimers (R2).</text>
</comment>
<comment type="similarity">
    <text evidence="1">Belongs to the aspartate/ornithine carbamoyltransferase superfamily. ATCase family.</text>
</comment>
<reference key="1">
    <citation type="submission" date="2007-07" db="EMBL/GenBank/DDBJ databases">
        <title>Genome sequence of Campylobacter curvus 525.92 isolated from human feces.</title>
        <authorList>
            <person name="Fouts D.E."/>
            <person name="Mongodin E.F."/>
            <person name="Puiu D."/>
            <person name="Sebastian Y."/>
            <person name="Miller W.G."/>
            <person name="Mandrell R.E."/>
            <person name="Lastovica A.J."/>
            <person name="Nelson K.E."/>
        </authorList>
    </citation>
    <scope>NUCLEOTIDE SEQUENCE [LARGE SCALE GENOMIC DNA]</scope>
    <source>
        <strain>525.92</strain>
    </source>
</reference>
<gene>
    <name evidence="1" type="primary">pyrB</name>
    <name type="ordered locus">Ccur92_07260</name>
    <name type="ORF">CCV52592_0155</name>
</gene>
<organism>
    <name type="scientific">Campylobacter curvus (strain 525.92)</name>
    <dbReference type="NCBI Taxonomy" id="360105"/>
    <lineage>
        <taxon>Bacteria</taxon>
        <taxon>Pseudomonadati</taxon>
        <taxon>Campylobacterota</taxon>
        <taxon>Epsilonproteobacteria</taxon>
        <taxon>Campylobacterales</taxon>
        <taxon>Campylobacteraceae</taxon>
        <taxon>Campylobacter</taxon>
    </lineage>
</organism>